<accession>B9KL88</accession>
<protein>
    <recommendedName>
        <fullName evidence="1">Elongation factor G</fullName>
        <shortName evidence="1">EF-G</shortName>
    </recommendedName>
</protein>
<evidence type="ECO:0000255" key="1">
    <source>
        <dbReference type="HAMAP-Rule" id="MF_00054"/>
    </source>
</evidence>
<organism>
    <name type="scientific">Cereibacter sphaeroides (strain KD131 / KCTC 12085)</name>
    <name type="common">Rhodobacter sphaeroides</name>
    <dbReference type="NCBI Taxonomy" id="557760"/>
    <lineage>
        <taxon>Bacteria</taxon>
        <taxon>Pseudomonadati</taxon>
        <taxon>Pseudomonadota</taxon>
        <taxon>Alphaproteobacteria</taxon>
        <taxon>Rhodobacterales</taxon>
        <taxon>Paracoccaceae</taxon>
        <taxon>Cereibacter</taxon>
    </lineage>
</organism>
<keyword id="KW-0963">Cytoplasm</keyword>
<keyword id="KW-0251">Elongation factor</keyword>
<keyword id="KW-0342">GTP-binding</keyword>
<keyword id="KW-0547">Nucleotide-binding</keyword>
<keyword id="KW-0648">Protein biosynthesis</keyword>
<dbReference type="EMBL" id="CP001150">
    <property type="protein sequence ID" value="ACL99870.1"/>
    <property type="molecule type" value="Genomic_DNA"/>
</dbReference>
<dbReference type="RefSeq" id="WP_012643432.1">
    <property type="nucleotide sequence ID" value="NC_011963.1"/>
</dbReference>
<dbReference type="SMR" id="B9KL88"/>
<dbReference type="GeneID" id="67445497"/>
<dbReference type="KEGG" id="rsk:RSKD131_0011"/>
<dbReference type="HOGENOM" id="CLU_002794_4_1_5"/>
<dbReference type="GO" id="GO:0005737">
    <property type="term" value="C:cytoplasm"/>
    <property type="evidence" value="ECO:0007669"/>
    <property type="project" value="UniProtKB-SubCell"/>
</dbReference>
<dbReference type="GO" id="GO:0005525">
    <property type="term" value="F:GTP binding"/>
    <property type="evidence" value="ECO:0007669"/>
    <property type="project" value="UniProtKB-UniRule"/>
</dbReference>
<dbReference type="GO" id="GO:0003924">
    <property type="term" value="F:GTPase activity"/>
    <property type="evidence" value="ECO:0007669"/>
    <property type="project" value="InterPro"/>
</dbReference>
<dbReference type="GO" id="GO:0097216">
    <property type="term" value="F:guanosine tetraphosphate binding"/>
    <property type="evidence" value="ECO:0007669"/>
    <property type="project" value="UniProtKB-ARBA"/>
</dbReference>
<dbReference type="GO" id="GO:0003746">
    <property type="term" value="F:translation elongation factor activity"/>
    <property type="evidence" value="ECO:0007669"/>
    <property type="project" value="UniProtKB-UniRule"/>
</dbReference>
<dbReference type="GO" id="GO:0032790">
    <property type="term" value="P:ribosome disassembly"/>
    <property type="evidence" value="ECO:0007669"/>
    <property type="project" value="TreeGrafter"/>
</dbReference>
<dbReference type="CDD" id="cd01886">
    <property type="entry name" value="EF-G"/>
    <property type="match status" value="1"/>
</dbReference>
<dbReference type="CDD" id="cd16262">
    <property type="entry name" value="EFG_III"/>
    <property type="match status" value="1"/>
</dbReference>
<dbReference type="CDD" id="cd01434">
    <property type="entry name" value="EFG_mtEFG1_IV"/>
    <property type="match status" value="1"/>
</dbReference>
<dbReference type="CDD" id="cd03713">
    <property type="entry name" value="EFG_mtEFG_C"/>
    <property type="match status" value="1"/>
</dbReference>
<dbReference type="CDD" id="cd04088">
    <property type="entry name" value="EFG_mtEFG_II"/>
    <property type="match status" value="1"/>
</dbReference>
<dbReference type="FunFam" id="2.40.30.10:FF:000006">
    <property type="entry name" value="Elongation factor G"/>
    <property type="match status" value="1"/>
</dbReference>
<dbReference type="FunFam" id="3.30.230.10:FF:000003">
    <property type="entry name" value="Elongation factor G"/>
    <property type="match status" value="1"/>
</dbReference>
<dbReference type="FunFam" id="3.30.70.240:FF:000001">
    <property type="entry name" value="Elongation factor G"/>
    <property type="match status" value="1"/>
</dbReference>
<dbReference type="FunFam" id="3.30.70.870:FF:000001">
    <property type="entry name" value="Elongation factor G"/>
    <property type="match status" value="1"/>
</dbReference>
<dbReference type="FunFam" id="3.40.50.300:FF:000029">
    <property type="entry name" value="Elongation factor G"/>
    <property type="match status" value="1"/>
</dbReference>
<dbReference type="Gene3D" id="3.30.230.10">
    <property type="match status" value="1"/>
</dbReference>
<dbReference type="Gene3D" id="3.30.70.240">
    <property type="match status" value="1"/>
</dbReference>
<dbReference type="Gene3D" id="3.30.70.870">
    <property type="entry name" value="Elongation Factor G (Translational Gtpase), domain 3"/>
    <property type="match status" value="1"/>
</dbReference>
<dbReference type="Gene3D" id="3.40.50.300">
    <property type="entry name" value="P-loop containing nucleotide triphosphate hydrolases"/>
    <property type="match status" value="1"/>
</dbReference>
<dbReference type="Gene3D" id="2.40.30.10">
    <property type="entry name" value="Translation factors"/>
    <property type="match status" value="1"/>
</dbReference>
<dbReference type="HAMAP" id="MF_00054_B">
    <property type="entry name" value="EF_G_EF_2_B"/>
    <property type="match status" value="1"/>
</dbReference>
<dbReference type="InterPro" id="IPR041095">
    <property type="entry name" value="EFG_II"/>
</dbReference>
<dbReference type="InterPro" id="IPR009022">
    <property type="entry name" value="EFG_III"/>
</dbReference>
<dbReference type="InterPro" id="IPR035647">
    <property type="entry name" value="EFG_III/V"/>
</dbReference>
<dbReference type="InterPro" id="IPR047872">
    <property type="entry name" value="EFG_IV"/>
</dbReference>
<dbReference type="InterPro" id="IPR035649">
    <property type="entry name" value="EFG_V"/>
</dbReference>
<dbReference type="InterPro" id="IPR000640">
    <property type="entry name" value="EFG_V-like"/>
</dbReference>
<dbReference type="InterPro" id="IPR004161">
    <property type="entry name" value="EFTu-like_2"/>
</dbReference>
<dbReference type="InterPro" id="IPR031157">
    <property type="entry name" value="G_TR_CS"/>
</dbReference>
<dbReference type="InterPro" id="IPR027417">
    <property type="entry name" value="P-loop_NTPase"/>
</dbReference>
<dbReference type="InterPro" id="IPR020568">
    <property type="entry name" value="Ribosomal_Su5_D2-typ_SF"/>
</dbReference>
<dbReference type="InterPro" id="IPR014721">
    <property type="entry name" value="Ribsml_uS5_D2-typ_fold_subgr"/>
</dbReference>
<dbReference type="InterPro" id="IPR005225">
    <property type="entry name" value="Small_GTP-bd"/>
</dbReference>
<dbReference type="InterPro" id="IPR000795">
    <property type="entry name" value="T_Tr_GTP-bd_dom"/>
</dbReference>
<dbReference type="InterPro" id="IPR009000">
    <property type="entry name" value="Transl_B-barrel_sf"/>
</dbReference>
<dbReference type="InterPro" id="IPR004540">
    <property type="entry name" value="Transl_elong_EFG/EF2"/>
</dbReference>
<dbReference type="InterPro" id="IPR005517">
    <property type="entry name" value="Transl_elong_EFG/EF2_IV"/>
</dbReference>
<dbReference type="NCBIfam" id="TIGR00484">
    <property type="entry name" value="EF-G"/>
    <property type="match status" value="1"/>
</dbReference>
<dbReference type="NCBIfam" id="NF009381">
    <property type="entry name" value="PRK12740.1-5"/>
    <property type="match status" value="1"/>
</dbReference>
<dbReference type="NCBIfam" id="TIGR00231">
    <property type="entry name" value="small_GTP"/>
    <property type="match status" value="1"/>
</dbReference>
<dbReference type="PANTHER" id="PTHR43261:SF1">
    <property type="entry name" value="RIBOSOME-RELEASING FACTOR 2, MITOCHONDRIAL"/>
    <property type="match status" value="1"/>
</dbReference>
<dbReference type="PANTHER" id="PTHR43261">
    <property type="entry name" value="TRANSLATION ELONGATION FACTOR G-RELATED"/>
    <property type="match status" value="1"/>
</dbReference>
<dbReference type="Pfam" id="PF00679">
    <property type="entry name" value="EFG_C"/>
    <property type="match status" value="1"/>
</dbReference>
<dbReference type="Pfam" id="PF14492">
    <property type="entry name" value="EFG_III"/>
    <property type="match status" value="1"/>
</dbReference>
<dbReference type="Pfam" id="PF03764">
    <property type="entry name" value="EFG_IV"/>
    <property type="match status" value="1"/>
</dbReference>
<dbReference type="Pfam" id="PF00009">
    <property type="entry name" value="GTP_EFTU"/>
    <property type="match status" value="1"/>
</dbReference>
<dbReference type="Pfam" id="PF03144">
    <property type="entry name" value="GTP_EFTU_D2"/>
    <property type="match status" value="1"/>
</dbReference>
<dbReference type="PRINTS" id="PR00315">
    <property type="entry name" value="ELONGATNFCT"/>
</dbReference>
<dbReference type="SMART" id="SM00838">
    <property type="entry name" value="EFG_C"/>
    <property type="match status" value="1"/>
</dbReference>
<dbReference type="SMART" id="SM00889">
    <property type="entry name" value="EFG_IV"/>
    <property type="match status" value="1"/>
</dbReference>
<dbReference type="SUPFAM" id="SSF54980">
    <property type="entry name" value="EF-G C-terminal domain-like"/>
    <property type="match status" value="2"/>
</dbReference>
<dbReference type="SUPFAM" id="SSF52540">
    <property type="entry name" value="P-loop containing nucleoside triphosphate hydrolases"/>
    <property type="match status" value="1"/>
</dbReference>
<dbReference type="SUPFAM" id="SSF54211">
    <property type="entry name" value="Ribosomal protein S5 domain 2-like"/>
    <property type="match status" value="1"/>
</dbReference>
<dbReference type="SUPFAM" id="SSF50447">
    <property type="entry name" value="Translation proteins"/>
    <property type="match status" value="1"/>
</dbReference>
<dbReference type="PROSITE" id="PS00301">
    <property type="entry name" value="G_TR_1"/>
    <property type="match status" value="1"/>
</dbReference>
<dbReference type="PROSITE" id="PS51722">
    <property type="entry name" value="G_TR_2"/>
    <property type="match status" value="1"/>
</dbReference>
<gene>
    <name evidence="1" type="primary">fusA</name>
    <name type="ordered locus">RSKD131_0011</name>
</gene>
<comment type="function">
    <text evidence="1">Catalyzes the GTP-dependent ribosomal translocation step during translation elongation. During this step, the ribosome changes from the pre-translocational (PRE) to the post-translocational (POST) state as the newly formed A-site-bound peptidyl-tRNA and P-site-bound deacylated tRNA move to the P and E sites, respectively. Catalyzes the coordinated movement of the two tRNA molecules, the mRNA and conformational changes in the ribosome.</text>
</comment>
<comment type="subcellular location">
    <subcellularLocation>
        <location evidence="1">Cytoplasm</location>
    </subcellularLocation>
</comment>
<comment type="similarity">
    <text evidence="1">Belongs to the TRAFAC class translation factor GTPase superfamily. Classic translation factor GTPase family. EF-G/EF-2 subfamily.</text>
</comment>
<feature type="chain" id="PRO_1000201483" description="Elongation factor G">
    <location>
        <begin position="1"/>
        <end position="705"/>
    </location>
</feature>
<feature type="domain" description="tr-type G">
    <location>
        <begin position="8"/>
        <end position="294"/>
    </location>
</feature>
<feature type="binding site" evidence="1">
    <location>
        <begin position="17"/>
        <end position="24"/>
    </location>
    <ligand>
        <name>GTP</name>
        <dbReference type="ChEBI" id="CHEBI:37565"/>
    </ligand>
</feature>
<feature type="binding site" evidence="1">
    <location>
        <begin position="92"/>
        <end position="96"/>
    </location>
    <ligand>
        <name>GTP</name>
        <dbReference type="ChEBI" id="CHEBI:37565"/>
    </ligand>
</feature>
<feature type="binding site" evidence="1">
    <location>
        <begin position="146"/>
        <end position="149"/>
    </location>
    <ligand>
        <name>GTP</name>
        <dbReference type="ChEBI" id="CHEBI:37565"/>
    </ligand>
</feature>
<name>EFG_CERSK</name>
<proteinExistence type="inferred from homology"/>
<reference key="1">
    <citation type="journal article" date="2009" name="J. Bacteriol.">
        <title>Complete genome sequence of Rhodobacter sphaeroides KD131.</title>
        <authorList>
            <person name="Lim S.-K."/>
            <person name="Kim S.J."/>
            <person name="Cha S.H."/>
            <person name="Oh Y.-K."/>
            <person name="Rhee H.-J."/>
            <person name="Kim M.-S."/>
            <person name="Lee J.K."/>
        </authorList>
    </citation>
    <scope>NUCLEOTIDE SEQUENCE [LARGE SCALE GENOMIC DNA]</scope>
    <source>
        <strain>KD131 / KCTC 12085</strain>
    </source>
</reference>
<sequence>MARDYPLELYRNFGIMAHIDAGKTTTTERILYYTGKSHKIGEVHDGAATMDWMEQEQERGITITSAATTTFWERTEDGKTPLSPKHRFNIIDTPGHVDFTIEVERSLAVLDGAVCLLDANAGVEPQTETVWRQADRYKVPRIVFVNKMDKIGADFFNCVKMIKDRTGATPAPIALPIGAEDKLEGIIDLVTMQEWVYQGEDLGASWIIKDVRDELKAEAEEWRGKLIELAVEQDDEAMEAYLEGNEPDVPTLRKLIRKGCLAMAFVPVTAGSAFKNKGVQPVLNSVIDYLPSPLDVPAYMGFAPGDETETRNIARSADDSQPFAALAFKIMNDPFVGSLTFTRLYSGVLKKGDQMVNSTKGKRERVGRMMMMHAINREEIDEAFAGDIIALAGLKETTTGDTLCDPANQVVLETMTFPEPVIEIAVEPKTKADQEKMGLALARLAAEDPSFRVETDFESGQTIMKGMGELHLDILVDRMKREFKVEANIGAPQVAYRETISREAEIDYTHKKQTGGTGQFARVKLVITPTEPGEGYSFESKIVGGAVPKEYIPGVEKGIKSVMDSGPLAGFPVIDFRVALIDGAFHDVDSSVLAFEIASRAAMREGLKKAGAKLLEPIMKVEVVTPEEYTGGIIGDLTSRRGMVQGQDTRGNANVINAFVPLANMFGYINTLRSMSSGRAVFTMHFDHYDAVPQNISDEIQKKYA</sequence>